<gene>
    <name type="primary">PTMA</name>
    <name type="synonym">TMSA</name>
</gene>
<keyword id="KW-0002">3D-structure</keyword>
<keyword id="KW-0007">Acetylation</keyword>
<keyword id="KW-0025">Alternative splicing</keyword>
<keyword id="KW-0903">Direct protein sequencing</keyword>
<keyword id="KW-1017">Isopeptide bond</keyword>
<keyword id="KW-0539">Nucleus</keyword>
<keyword id="KW-0597">Phosphoprotein</keyword>
<keyword id="KW-1267">Proteomics identification</keyword>
<keyword id="KW-1185">Reference proteome</keyword>
<keyword id="KW-0832">Ubl conjugation</keyword>
<evidence type="ECO:0000250" key="1"/>
<evidence type="ECO:0000250" key="2">
    <source>
        <dbReference type="UniProtKB" id="P01252"/>
    </source>
</evidence>
<evidence type="ECO:0000250" key="3">
    <source>
        <dbReference type="UniProtKB" id="P26350"/>
    </source>
</evidence>
<evidence type="ECO:0000256" key="4">
    <source>
        <dbReference type="SAM" id="MobiDB-lite"/>
    </source>
</evidence>
<evidence type="ECO:0000269" key="5">
    <source>
    </source>
</evidence>
<evidence type="ECO:0000269" key="6">
    <source>
    </source>
</evidence>
<evidence type="ECO:0000269" key="7">
    <source>
    </source>
</evidence>
<evidence type="ECO:0000303" key="8">
    <source>
    </source>
</evidence>
<evidence type="ECO:0000303" key="9">
    <source>
    </source>
</evidence>
<evidence type="ECO:0000303" key="10">
    <source>
    </source>
</evidence>
<evidence type="ECO:0000303" key="11">
    <source ref="5"/>
</evidence>
<evidence type="ECO:0000305" key="12"/>
<evidence type="ECO:0007744" key="13">
    <source>
    </source>
</evidence>
<evidence type="ECO:0007744" key="14">
    <source>
    </source>
</evidence>
<evidence type="ECO:0007744" key="15">
    <source>
    </source>
</evidence>
<evidence type="ECO:0007744" key="16">
    <source>
    </source>
</evidence>
<evidence type="ECO:0007744" key="17">
    <source>
    </source>
</evidence>
<evidence type="ECO:0007744" key="18">
    <source>
    </source>
</evidence>
<evidence type="ECO:0007744" key="19">
    <source>
    </source>
</evidence>
<evidence type="ECO:0007744" key="20">
    <source>
    </source>
</evidence>
<evidence type="ECO:0007744" key="21">
    <source>
    </source>
</evidence>
<evidence type="ECO:0007744" key="22">
    <source>
    </source>
</evidence>
<evidence type="ECO:0007744" key="23">
    <source>
    </source>
</evidence>
<evidence type="ECO:0007744" key="24">
    <source>
    </source>
</evidence>
<evidence type="ECO:0007829" key="25">
    <source>
        <dbReference type="PDB" id="2L9I"/>
    </source>
</evidence>
<comment type="function">
    <text>Prothymosin alpha may mediate immune function by conferring resistance to certain opportunistic infections.</text>
</comment>
<comment type="subunit">
    <text evidence="5">Interacts with NUPR1; regulates apoptotic process.</text>
</comment>
<comment type="interaction">
    <interactant intactId="EBI-2682091">
        <id>P06454</id>
    </interactant>
    <interactant intactId="EBI-3908808">
        <id>O60356</id>
        <label>NUPR1</label>
    </interactant>
    <organismsDiffer>false</organismsDiffer>
    <experiments>7</experiments>
</comment>
<comment type="interaction">
    <interactant intactId="EBI-2682091">
        <id>P06454</id>
    </interactant>
    <interactant intactId="EBI-750109">
        <id>Q9NYB0</id>
        <label>TERF2IP</label>
    </interactant>
    <organismsDiffer>false</organismsDiffer>
    <experiments>2</experiments>
</comment>
<comment type="interaction">
    <interactant intactId="EBI-10194874">
        <id>P06454-2</id>
    </interactant>
    <interactant intactId="EBI-348399">
        <id>P22607</id>
        <label>FGFR3</label>
    </interactant>
    <organismsDiffer>false</organismsDiffer>
    <experiments>3</experiments>
</comment>
<comment type="interaction">
    <interactant intactId="EBI-10194874">
        <id>P06454-2</id>
    </interactant>
    <interactant intactId="EBI-8285963">
        <id>Q14957</id>
        <label>GRIN2C</label>
    </interactant>
    <organismsDiffer>false</organismsDiffer>
    <experiments>3</experiments>
</comment>
<comment type="interaction">
    <interactant intactId="EBI-10194874">
        <id>P06454-2</id>
    </interactant>
    <interactant intactId="EBI-751001">
        <id>Q14145</id>
        <label>KEAP1</label>
    </interactant>
    <organismsDiffer>false</organismsDiffer>
    <experiments>6</experiments>
</comment>
<comment type="interaction">
    <interactant intactId="EBI-10194874">
        <id>P06454-2</id>
    </interactant>
    <interactant intactId="EBI-741480">
        <id>Q9UMX0</id>
        <label>UBQLN1</label>
    </interactant>
    <organismsDiffer>false</organismsDiffer>
    <experiments>3</experiments>
</comment>
<comment type="interaction">
    <interactant intactId="EBI-10194874">
        <id>P06454-2</id>
    </interactant>
    <interactant intactId="EBI-25900580">
        <id>Q9Y649</id>
    </interactant>
    <organismsDiffer>false</organismsDiffer>
    <experiments>3</experiments>
</comment>
<comment type="subcellular location">
    <subcellularLocation>
        <location>Nucleus</location>
    </subcellularLocation>
</comment>
<comment type="alternative products">
    <event type="alternative splicing"/>
    <isoform>
        <id>P06454-1</id>
        <name>1</name>
        <sequence type="displayed"/>
    </isoform>
    <isoform>
        <id>P06454-2</id>
        <name>2</name>
        <sequence type="described" ref="VSP_011508"/>
    </isoform>
</comment>
<comment type="PTM">
    <text evidence="1">Covalently linked to a small RNA of about 20 nucleotides.</text>
</comment>
<comment type="similarity">
    <text evidence="12">Belongs to the pro/parathymosin family.</text>
</comment>
<comment type="online information" name="Atlas of Genetics and Cytogenetics in Oncology and Haematology">
    <link uri="https://atlasgeneticsoncology.org/gene/44094/PTMA"/>
</comment>
<proteinExistence type="evidence at protein level"/>
<feature type="chain" id="PRO_0000423255" description="Prothymosin alpha">
    <location>
        <begin position="1"/>
        <end position="111"/>
    </location>
</feature>
<feature type="initiator methionine" description="Removed; alternate" evidence="6 7 15 16 19 20 21 22">
    <location>
        <position position="1"/>
    </location>
</feature>
<feature type="chain" id="PRO_0000299250" description="Prothymosin alpha, N-terminally processed">
    <location>
        <begin position="2"/>
        <end position="111"/>
    </location>
</feature>
<feature type="peptide" id="PRO_0000029865" description="Thymosin alpha-1">
    <location>
        <begin position="2"/>
        <end position="29"/>
    </location>
</feature>
<feature type="region of interest" description="Disordered" evidence="4">
    <location>
        <begin position="1"/>
        <end position="111"/>
    </location>
</feature>
<feature type="compositionally biased region" description="Basic and acidic residues" evidence="4">
    <location>
        <begin position="13"/>
        <end position="31"/>
    </location>
</feature>
<feature type="compositionally biased region" description="Acidic residues" evidence="4">
    <location>
        <begin position="40"/>
        <end position="84"/>
    </location>
</feature>
<feature type="compositionally biased region" description="Basic and acidic residues" evidence="4">
    <location>
        <begin position="101"/>
        <end position="111"/>
    </location>
</feature>
<feature type="modified residue" description="N-acetylmethionine" evidence="19">
    <location>
        <position position="1"/>
    </location>
</feature>
<feature type="modified residue" description="N-acetylserine; in Prothymosin alpha, N-terminally processed" evidence="6 7 15 16 19 20 21 22">
    <location>
        <position position="2"/>
    </location>
</feature>
<feature type="modified residue" description="Phosphoserine" evidence="7 13 15 18 19 20 23">
    <location>
        <position position="2"/>
    </location>
</feature>
<feature type="modified residue" description="Phosphothreonine" evidence="2">
    <location>
        <position position="8"/>
    </location>
</feature>
<feature type="modified residue" description="Phosphoserine" evidence="19">
    <location>
        <position position="9"/>
    </location>
</feature>
<feature type="modified residue" description="Phosphoserine" evidence="20 23">
    <location>
        <position position="10"/>
    </location>
</feature>
<feature type="modified residue" description="Phosphothreonine" evidence="2">
    <location>
        <position position="13"/>
    </location>
</feature>
<feature type="modified residue" description="Phosphothreonine" evidence="2">
    <location>
        <position position="14"/>
    </location>
</feature>
<feature type="modified residue" description="N6-acetyllysine; alternate" evidence="17">
    <location>
        <position position="15"/>
    </location>
</feature>
<feature type="modified residue" description="N6-succinyllysine; alternate" evidence="3">
    <location>
        <position position="15"/>
    </location>
</feature>
<feature type="modified residue" description="Phosphothreonine" evidence="18">
    <location>
        <position position="102"/>
    </location>
</feature>
<feature type="modified residue" description="N6-acetyllysine; alternate" evidence="3">
    <location>
        <position position="103"/>
    </location>
</feature>
<feature type="modified residue" description="Phosphothreonine" evidence="14">
    <location>
        <position position="107"/>
    </location>
</feature>
<feature type="cross-link" description="Glycyl lysine isopeptide (Lys-Gly) (interchain with G-Cter in SUMO2); alternate" evidence="24">
    <location>
        <position position="103"/>
    </location>
</feature>
<feature type="splice variant" id="VSP_011508" description="In isoform 2." evidence="8 9 10 11">
    <location>
        <position position="40"/>
    </location>
</feature>
<feature type="helix" evidence="25">
    <location>
        <begin position="3"/>
        <end position="6"/>
    </location>
</feature>
<feature type="helix" evidence="25">
    <location>
        <begin position="9"/>
        <end position="28"/>
    </location>
</feature>
<sequence length="111" mass="12203">MSDAAVDTSSEITTKDLKEKKEVVEEAENGRDAPANGNAENEENGEQEADNEVDEEEEEGGEEEEEEEEGDGEEEDGDEDEEAESATGKRAAEDDEDDDVDTKKQKTDEDD</sequence>
<dbReference type="EMBL" id="M14630">
    <property type="protein sequence ID" value="AAA61182.1"/>
    <property type="molecule type" value="mRNA"/>
</dbReference>
<dbReference type="EMBL" id="M14483">
    <property type="protein sequence ID" value="AAA61183.1"/>
    <property type="molecule type" value="mRNA"/>
</dbReference>
<dbReference type="EMBL" id="M67480">
    <property type="protein sequence ID" value="AAA63240.1"/>
    <property type="molecule type" value="Genomic_DNA"/>
</dbReference>
<dbReference type="EMBL" id="J04797">
    <property type="protein sequence ID" value="AAA63240.1"/>
    <property type="status" value="JOINED"/>
    <property type="molecule type" value="Genomic_DNA"/>
</dbReference>
<dbReference type="EMBL" id="M67480">
    <property type="protein sequence ID" value="AAA63239.1"/>
    <property type="molecule type" value="Genomic_DNA"/>
</dbReference>
<dbReference type="EMBL" id="J04797">
    <property type="protein sequence ID" value="AAA63239.1"/>
    <property type="status" value="JOINED"/>
    <property type="molecule type" value="Genomic_DNA"/>
</dbReference>
<dbReference type="EMBL" id="M26708">
    <property type="protein sequence ID" value="AAA60213.1"/>
    <property type="molecule type" value="mRNA"/>
</dbReference>
<dbReference type="EMBL" id="AF348514">
    <property type="protein sequence ID" value="AAK30146.1"/>
    <property type="molecule type" value="mRNA"/>
</dbReference>
<dbReference type="EMBL" id="BC051265">
    <property type="protein sequence ID" value="AAH51265.1"/>
    <property type="molecule type" value="mRNA"/>
</dbReference>
<dbReference type="EMBL" id="BC066905">
    <property type="protein sequence ID" value="AAH66905.1"/>
    <property type="molecule type" value="mRNA"/>
</dbReference>
<dbReference type="EMBL" id="BC070480">
    <property type="protein sequence ID" value="AAH70480.1"/>
    <property type="molecule type" value="mRNA"/>
</dbReference>
<dbReference type="EMBL" id="BC071647">
    <property type="protein sequence ID" value="AAH71647.1"/>
    <property type="molecule type" value="mRNA"/>
</dbReference>
<dbReference type="EMBL" id="BC071879">
    <property type="protein sequence ID" value="AAH71879.1"/>
    <property type="molecule type" value="mRNA"/>
</dbReference>
<dbReference type="EMBL" id="S56449">
    <property type="protein sequence ID" value="AAD13882.1"/>
    <property type="molecule type" value="Genomic_DNA"/>
</dbReference>
<dbReference type="CCDS" id="CCDS42833.1">
    <molecule id="P06454-1"/>
</dbReference>
<dbReference type="CCDS" id="CCDS46541.1">
    <molecule id="P06454-2"/>
</dbReference>
<dbReference type="PIR" id="A42004">
    <property type="entry name" value="TNHUA"/>
</dbReference>
<dbReference type="PIR" id="C33356">
    <property type="entry name" value="C33356"/>
</dbReference>
<dbReference type="RefSeq" id="NP_001092755.1">
    <molecule id="P06454-1"/>
    <property type="nucleotide sequence ID" value="NM_001099285.2"/>
</dbReference>
<dbReference type="RefSeq" id="NP_002814.3">
    <molecule id="P06454-2"/>
    <property type="nucleotide sequence ID" value="NM_002823.4"/>
</dbReference>
<dbReference type="PDB" id="2L9I">
    <property type="method" value="NMR"/>
    <property type="chains" value="A=2-29"/>
</dbReference>
<dbReference type="PDB" id="2MNQ">
    <property type="method" value="NMR"/>
    <property type="chains" value="A=2-29"/>
</dbReference>
<dbReference type="PDBsum" id="2L9I"/>
<dbReference type="PDBsum" id="2MNQ"/>
<dbReference type="BMRB" id="P06454"/>
<dbReference type="SMR" id="P06454"/>
<dbReference type="BioGRID" id="111724">
    <property type="interactions" value="198"/>
</dbReference>
<dbReference type="CORUM" id="P06454"/>
<dbReference type="DIP" id="DIP-40743N"/>
<dbReference type="FunCoup" id="P06454">
    <property type="interactions" value="2440"/>
</dbReference>
<dbReference type="IntAct" id="P06454">
    <property type="interactions" value="61"/>
</dbReference>
<dbReference type="MINT" id="P06454"/>
<dbReference type="STRING" id="9606.ENSP00000344547"/>
<dbReference type="GlyGen" id="P06454">
    <property type="glycosylation" value="2 sites, 1 O-linked glycan (2 sites)"/>
</dbReference>
<dbReference type="iPTMnet" id="P06454"/>
<dbReference type="PhosphoSitePlus" id="P06454"/>
<dbReference type="SwissPalm" id="P06454"/>
<dbReference type="BioMuta" id="PTMA"/>
<dbReference type="jPOST" id="P06454"/>
<dbReference type="MassIVE" id="P06454"/>
<dbReference type="PaxDb" id="9606-ENSP00000344547"/>
<dbReference type="PeptideAtlas" id="P06454"/>
<dbReference type="ProteomicsDB" id="51903">
    <molecule id="P06454-1"/>
</dbReference>
<dbReference type="ProteomicsDB" id="51904">
    <molecule id="P06454-2"/>
</dbReference>
<dbReference type="Pumba" id="P06454"/>
<dbReference type="TopDownProteomics" id="P06454-1">
    <molecule id="P06454-1"/>
</dbReference>
<dbReference type="TopDownProteomics" id="P06454-2">
    <molecule id="P06454-2"/>
</dbReference>
<dbReference type="Antibodypedia" id="11847">
    <property type="antibodies" value="346 antibodies from 34 providers"/>
</dbReference>
<dbReference type="DNASU" id="5757"/>
<dbReference type="Ensembl" id="ENST00000341369.11">
    <molecule id="P06454-1"/>
    <property type="protein sequence ID" value="ENSP00000344547.7"/>
    <property type="gene ID" value="ENSG00000187514.17"/>
</dbReference>
<dbReference type="Ensembl" id="ENST00000409115.8">
    <molecule id="P06454-2"/>
    <property type="protein sequence ID" value="ENSP00000386819.3"/>
    <property type="gene ID" value="ENSG00000187514.17"/>
</dbReference>
<dbReference type="GeneID" id="5757"/>
<dbReference type="KEGG" id="hsa:5757"/>
<dbReference type="MANE-Select" id="ENST00000409115.8">
    <molecule id="P06454-2"/>
    <property type="protein sequence ID" value="ENSP00000386819.3"/>
    <property type="RefSeq nucleotide sequence ID" value="NM_002823.5"/>
    <property type="RefSeq protein sequence ID" value="NP_002814.3"/>
</dbReference>
<dbReference type="UCSC" id="uc002vsc.5">
    <molecule id="P06454-1"/>
    <property type="organism name" value="human"/>
</dbReference>
<dbReference type="AGR" id="HGNC:9623"/>
<dbReference type="CTD" id="5757"/>
<dbReference type="DisGeNET" id="5757"/>
<dbReference type="GeneCards" id="PTMA"/>
<dbReference type="HGNC" id="HGNC:9623">
    <property type="gene designation" value="PTMA"/>
</dbReference>
<dbReference type="HPA" id="ENSG00000187514">
    <property type="expression patterns" value="Low tissue specificity"/>
</dbReference>
<dbReference type="MIM" id="188390">
    <property type="type" value="gene"/>
</dbReference>
<dbReference type="neXtProt" id="NX_P06454"/>
<dbReference type="OpenTargets" id="ENSG00000187514"/>
<dbReference type="PharmGKB" id="PA33966"/>
<dbReference type="VEuPathDB" id="HostDB:ENSG00000187514"/>
<dbReference type="eggNOG" id="ENOG502S55T">
    <property type="taxonomic scope" value="Eukaryota"/>
</dbReference>
<dbReference type="GeneTree" id="ENSGT00940000155762"/>
<dbReference type="HOGENOM" id="CLU_136539_0_1_1"/>
<dbReference type="InParanoid" id="P06454"/>
<dbReference type="OMA" id="CILGMYP"/>
<dbReference type="PAN-GO" id="P06454">
    <property type="GO annotations" value="4 GO annotations based on evolutionary models"/>
</dbReference>
<dbReference type="TreeFam" id="TF350357"/>
<dbReference type="PathwayCommons" id="P06454"/>
<dbReference type="SignaLink" id="P06454"/>
<dbReference type="SIGNOR" id="P06454"/>
<dbReference type="BioGRID-ORCS" id="5757">
    <property type="hits" value="277 hits in 1106 CRISPR screens"/>
</dbReference>
<dbReference type="ChiTaRS" id="PTMA">
    <property type="organism name" value="human"/>
</dbReference>
<dbReference type="EvolutionaryTrace" id="P06454"/>
<dbReference type="GeneWiki" id="Thymosin_%CE%B11"/>
<dbReference type="GenomeRNAi" id="5757"/>
<dbReference type="Pharos" id="P06454">
    <property type="development level" value="Tbio"/>
</dbReference>
<dbReference type="PRO" id="PR:P06454"/>
<dbReference type="Proteomes" id="UP000005640">
    <property type="component" value="Chromosome 2"/>
</dbReference>
<dbReference type="RNAct" id="P06454">
    <property type="molecule type" value="protein"/>
</dbReference>
<dbReference type="Bgee" id="ENSG00000187514">
    <property type="expression patterns" value="Expressed in calcaneal tendon and 99 other cell types or tissues"/>
</dbReference>
<dbReference type="ExpressionAtlas" id="P06454">
    <property type="expression patterns" value="baseline and differential"/>
</dbReference>
<dbReference type="GO" id="GO:0005829">
    <property type="term" value="C:cytosol"/>
    <property type="evidence" value="ECO:0000314"/>
    <property type="project" value="HPA"/>
</dbReference>
<dbReference type="GO" id="GO:0005654">
    <property type="term" value="C:nucleoplasm"/>
    <property type="evidence" value="ECO:0000314"/>
    <property type="project" value="HPA"/>
</dbReference>
<dbReference type="GO" id="GO:0005634">
    <property type="term" value="C:nucleus"/>
    <property type="evidence" value="ECO:0000314"/>
    <property type="project" value="CAFA"/>
</dbReference>
<dbReference type="GO" id="GO:0140297">
    <property type="term" value="F:DNA-binding transcription factor binding"/>
    <property type="evidence" value="ECO:0000353"/>
    <property type="project" value="CAFA"/>
</dbReference>
<dbReference type="GO" id="GO:0042393">
    <property type="term" value="F:histone binding"/>
    <property type="evidence" value="ECO:0000353"/>
    <property type="project" value="DisProt"/>
</dbReference>
<dbReference type="GO" id="GO:0140713">
    <property type="term" value="F:histone chaperone activity"/>
    <property type="evidence" value="ECO:0007669"/>
    <property type="project" value="Ensembl"/>
</dbReference>
<dbReference type="GO" id="GO:0006325">
    <property type="term" value="P:chromatin organization"/>
    <property type="evidence" value="ECO:0007669"/>
    <property type="project" value="Ensembl"/>
</dbReference>
<dbReference type="GO" id="GO:0006351">
    <property type="term" value="P:DNA-templated transcription"/>
    <property type="evidence" value="ECO:0000304"/>
    <property type="project" value="ProtInc"/>
</dbReference>
<dbReference type="GO" id="GO:0043066">
    <property type="term" value="P:negative regulation of apoptotic process"/>
    <property type="evidence" value="ECO:0000315"/>
    <property type="project" value="UniProtKB"/>
</dbReference>
<dbReference type="GO" id="GO:0045944">
    <property type="term" value="P:positive regulation of transcription by RNA polymerase II"/>
    <property type="evidence" value="ECO:0000318"/>
    <property type="project" value="GO_Central"/>
</dbReference>
<dbReference type="DisProt" id="DP01677"/>
<dbReference type="IDEAL" id="IID00699"/>
<dbReference type="InterPro" id="IPR004931">
    <property type="entry name" value="Pro/parathymosin"/>
</dbReference>
<dbReference type="PANTHER" id="PTHR22745">
    <property type="entry name" value="PROTHYMOSIN ALPHA"/>
    <property type="match status" value="1"/>
</dbReference>
<dbReference type="PANTHER" id="PTHR22745:SF0">
    <property type="entry name" value="PROTHYMOSIN ALPHA"/>
    <property type="match status" value="1"/>
</dbReference>
<dbReference type="Pfam" id="PF03247">
    <property type="entry name" value="Prothymosin"/>
    <property type="match status" value="1"/>
</dbReference>
<protein>
    <recommendedName>
        <fullName>Prothymosin alpha</fullName>
    </recommendedName>
    <component>
        <recommendedName>
            <fullName>Prothymosin alpha, N-terminally processed</fullName>
        </recommendedName>
    </component>
    <component>
        <recommendedName>
            <fullName>Thymosin alpha-1</fullName>
        </recommendedName>
    </component>
</protein>
<name>PTMA_HUMAN</name>
<organism>
    <name type="scientific">Homo sapiens</name>
    <name type="common">Human</name>
    <dbReference type="NCBI Taxonomy" id="9606"/>
    <lineage>
        <taxon>Eukaryota</taxon>
        <taxon>Metazoa</taxon>
        <taxon>Chordata</taxon>
        <taxon>Craniata</taxon>
        <taxon>Vertebrata</taxon>
        <taxon>Euteleostomi</taxon>
        <taxon>Mammalia</taxon>
        <taxon>Eutheria</taxon>
        <taxon>Euarchontoglires</taxon>
        <taxon>Primates</taxon>
        <taxon>Haplorrhini</taxon>
        <taxon>Catarrhini</taxon>
        <taxon>Hominidae</taxon>
        <taxon>Homo</taxon>
    </lineage>
</organism>
<accession>P06454</accession>
<accession>Q15249</accession>
<accession>Q15592</accession>
<reference key="1">
    <citation type="journal article" date="1986" name="Proc. Natl. Acad. Sci. U.S.A.">
        <title>The human prothymosin alpha gene is polymorphic and induced upon growth stimulation: evidence using a cloned cDNA.</title>
        <authorList>
            <person name="Eschenfeldt W.H."/>
            <person name="Berger S.L."/>
        </authorList>
    </citation>
    <scope>NUCLEOTIDE SEQUENCE [MRNA] (ISOFORM 1)</scope>
</reference>
<reference key="2">
    <citation type="journal article" date="1986" name="Proc. Natl. Acad. Sci. U.S.A.">
        <title>Molecular cloning of cDNA for human prothymosin alpha.</title>
        <authorList>
            <person name="Goodall G.J."/>
            <person name="Dominguez F."/>
            <person name="Horecker B.L."/>
        </authorList>
    </citation>
    <scope>NUCLEOTIDE SEQUENCE [MRNA] (ISOFORM 2)</scope>
</reference>
<reference key="3">
    <citation type="journal article" date="1989" name="J. Biol. Chem.">
        <title>Isolation and partial sequencing of the human prothymosin alpha gene family. Evidence against export of the gene products.</title>
        <authorList>
            <person name="Eschenfeldt W.H."/>
            <person name="Manrow R.E."/>
            <person name="Krug M.S."/>
            <person name="Berger S.L."/>
        </authorList>
    </citation>
    <scope>NUCLEOTIDE SEQUENCE [GENOMIC DNA] (ISOFORM 1)</scope>
    <scope>PARTIAL PROTEIN SEQUENCE</scope>
</reference>
<reference key="4">
    <citation type="journal article" date="1989" name="J. Biol. Chem.">
        <title>The expression of prothymosin alpha gene in T lymphocytes and leukemic lymphoid cells is tied to lymphocyte proliferation.</title>
        <authorList>
            <person name="Gomez-Marquez J."/>
            <person name="Segade F."/>
            <person name="Dosil M."/>
            <person name="Pichel J.G."/>
            <person name="Bustelo X.R."/>
            <person name="Freire M."/>
        </authorList>
    </citation>
    <scope>NUCLEOTIDE SEQUENCE [MRNA] (ISOFORM 2)</scope>
</reference>
<reference key="5">
    <citation type="submission" date="2001-02" db="EMBL/GenBank/DDBJ databases">
        <title>A novel prothymosin alpha cDNA from thymus.</title>
        <authorList>
            <person name="Li Z."/>
            <person name="Fan Q."/>
            <person name="Huang W."/>
            <person name="An L."/>
        </authorList>
    </citation>
    <scope>NUCLEOTIDE SEQUENCE [MRNA] (ISOFORM 2)</scope>
    <source>
        <tissue>Fetal thymus</tissue>
    </source>
</reference>
<reference key="6">
    <citation type="journal article" date="2004" name="Genome Res.">
        <title>The status, quality, and expansion of the NIH full-length cDNA project: the Mammalian Gene Collection (MGC).</title>
        <authorList>
            <consortium name="The MGC Project Team"/>
        </authorList>
    </citation>
    <scope>NUCLEOTIDE SEQUENCE [LARGE SCALE MRNA] (ISOFORM 2)</scope>
    <source>
        <tissue>Cervix</tissue>
        <tissue>Lung</tissue>
        <tissue>PNS</tissue>
        <tissue>Skin</tissue>
        <tissue>Testis</tissue>
    </source>
</reference>
<reference key="7">
    <citation type="journal article" date="1993" name="Hum. Genet.">
        <title>Prothymosin alpha gene in humans: organization of its promoter region and localization to chromosome 2.</title>
        <authorList>
            <person name="Szabo P."/>
            <person name="Panneerselvam C."/>
            <person name="Clinton M."/>
            <person name="Frangou-Lazaridis M."/>
            <person name="Weksler D."/>
            <person name="Whittington E."/>
            <person name="Macera M.J."/>
            <person name="Grzeschik K.H."/>
            <person name="Selvakumar A."/>
            <person name="Horecker B.L."/>
        </authorList>
    </citation>
    <scope>NUCLEOTIDE SEQUENCE [GENOMIC DNA] OF 1-15</scope>
</reference>
<reference key="8">
    <citation type="journal article" date="1986" name="Arch. Biochem. Biophys.">
        <title>Human prothymosin alpha: amino acid sequence and immunologic properties.</title>
        <authorList>
            <person name="Pan L.X."/>
            <person name="Haritos A.A."/>
            <person name="Wideman J."/>
            <person name="Komiyama T."/>
            <person name="Chang M."/>
            <person name="Stein S."/>
            <person name="Salvin S.B."/>
            <person name="Horecker B.L."/>
        </authorList>
    </citation>
    <scope>PARTIAL PROTEIN SEQUENCE</scope>
</reference>
<reference key="9">
    <citation type="journal article" date="1993" name="Biochemistry">
        <title>Phosphorylation of human and bovine prothymosin alpha in vivo.</title>
        <authorList>
            <person name="Sburlati A.R."/>
            <person name="De La Rosa A."/>
            <person name="Batey D.W."/>
            <person name="Kurys G.L."/>
            <person name="Manrow R.E."/>
            <person name="Pannell L.K."/>
            <person name="Martin B.M."/>
            <person name="Sheeley D.M."/>
            <person name="Berger S.L."/>
        </authorList>
    </citation>
    <scope>PHOSPHORYLATION AT SER-2</scope>
    <scope>ACETYLATION AT SER-2</scope>
</reference>
<reference key="10">
    <citation type="journal article" date="2006" name="Cell">
        <title>Global, in vivo, and site-specific phosphorylation dynamics in signaling networks.</title>
        <authorList>
            <person name="Olsen J.V."/>
            <person name="Blagoev B."/>
            <person name="Gnad F."/>
            <person name="Macek B."/>
            <person name="Kumar C."/>
            <person name="Mortensen P."/>
            <person name="Mann M."/>
        </authorList>
    </citation>
    <scope>PHOSPHORYLATION [LARGE SCALE ANALYSIS] AT SER-2</scope>
    <scope>IDENTIFICATION BY MASS SPECTROMETRY [LARGE SCALE ANALYSIS]</scope>
    <source>
        <tissue>Cervix carcinoma</tissue>
    </source>
</reference>
<reference key="11">
    <citation type="journal article" date="2006" name="Proc. Natl. Acad. Sci. U.S.A.">
        <title>Regulation of apoptosis by the p8/prothymosin alpha complex.</title>
        <authorList>
            <person name="Malicet C."/>
            <person name="Giroux V."/>
            <person name="Vasseur S."/>
            <person name="Dagorn J.C."/>
            <person name="Neira J.L."/>
            <person name="Iovanna J.L."/>
        </authorList>
    </citation>
    <scope>INTERACTION WITH NUPR1</scope>
</reference>
<reference key="12">
    <citation type="journal article" date="2008" name="Proc. Natl. Acad. Sci. U.S.A.">
        <title>A quantitative atlas of mitotic phosphorylation.</title>
        <authorList>
            <person name="Dephoure N."/>
            <person name="Zhou C."/>
            <person name="Villen J."/>
            <person name="Beausoleil S.A."/>
            <person name="Bakalarski C.E."/>
            <person name="Elledge S.J."/>
            <person name="Gygi S.P."/>
        </authorList>
    </citation>
    <scope>PHOSPHORYLATION [LARGE SCALE ANALYSIS] AT THR-107</scope>
    <scope>IDENTIFICATION BY MASS SPECTROMETRY [LARGE SCALE ANALYSIS]</scope>
    <source>
        <tissue>Cervix carcinoma</tissue>
    </source>
</reference>
<reference key="13">
    <citation type="journal article" date="2009" name="Anal. Chem.">
        <title>Lys-N and trypsin cover complementary parts of the phosphoproteome in a refined SCX-based approach.</title>
        <authorList>
            <person name="Gauci S."/>
            <person name="Helbig A.O."/>
            <person name="Slijper M."/>
            <person name="Krijgsveld J."/>
            <person name="Heck A.J."/>
            <person name="Mohammed S."/>
        </authorList>
    </citation>
    <scope>ACETYLATION [LARGE SCALE ANALYSIS] AT SER-2</scope>
    <scope>CLEAVAGE OF INITIATOR METHIONINE [LARGE SCALE ANALYSIS]</scope>
    <scope>IDENTIFICATION BY MASS SPECTROMETRY [LARGE SCALE ANALYSIS]</scope>
</reference>
<reference key="14">
    <citation type="journal article" date="2009" name="Mol. Cell. Proteomics">
        <title>Large-scale proteomics analysis of the human kinome.</title>
        <authorList>
            <person name="Oppermann F.S."/>
            <person name="Gnad F."/>
            <person name="Olsen J.V."/>
            <person name="Hornberger R."/>
            <person name="Greff Z."/>
            <person name="Keri G."/>
            <person name="Mann M."/>
            <person name="Daub H."/>
        </authorList>
    </citation>
    <scope>ACETYLATION [LARGE SCALE ANALYSIS] AT SER-2</scope>
    <scope>PHOSPHORYLATION [LARGE SCALE ANALYSIS] AT SER-2</scope>
    <scope>CLEAVAGE OF INITIATOR METHIONINE [LARGE SCALE ANALYSIS]</scope>
    <scope>IDENTIFICATION BY MASS SPECTROMETRY [LARGE SCALE ANALYSIS]</scope>
</reference>
<reference key="15">
    <citation type="journal article" date="2009" name="Sci. Signal.">
        <title>Quantitative phosphoproteomic analysis of T cell receptor signaling reveals system-wide modulation of protein-protein interactions.</title>
        <authorList>
            <person name="Mayya V."/>
            <person name="Lundgren D.H."/>
            <person name="Hwang S.-I."/>
            <person name="Rezaul K."/>
            <person name="Wu L."/>
            <person name="Eng J.K."/>
            <person name="Rodionov V."/>
            <person name="Han D.K."/>
        </authorList>
    </citation>
    <scope>PHOSPHORYLATION [LARGE SCALE ANALYSIS] AT SER-2 AND THR-102</scope>
    <scope>IDENTIFICATION BY MASS SPECTROMETRY [LARGE SCALE ANALYSIS]</scope>
    <source>
        <tissue>Leukemic T-cell</tissue>
    </source>
</reference>
<reference key="16">
    <citation type="journal article" date="2009" name="Science">
        <title>Lysine acetylation targets protein complexes and co-regulates major cellular functions.</title>
        <authorList>
            <person name="Choudhary C."/>
            <person name="Kumar C."/>
            <person name="Gnad F."/>
            <person name="Nielsen M.L."/>
            <person name="Rehman M."/>
            <person name="Walther T.C."/>
            <person name="Olsen J.V."/>
            <person name="Mann M."/>
        </authorList>
    </citation>
    <scope>ACETYLATION [LARGE SCALE ANALYSIS] AT LYS-15</scope>
    <scope>IDENTIFICATION BY MASS SPECTROMETRY [LARGE SCALE ANALYSIS]</scope>
</reference>
<reference key="17">
    <citation type="journal article" date="2010" name="Sci. Signal.">
        <title>Quantitative phosphoproteomics reveals widespread full phosphorylation site occupancy during mitosis.</title>
        <authorList>
            <person name="Olsen J.V."/>
            <person name="Vermeulen M."/>
            <person name="Santamaria A."/>
            <person name="Kumar C."/>
            <person name="Miller M.L."/>
            <person name="Jensen L.J."/>
            <person name="Gnad F."/>
            <person name="Cox J."/>
            <person name="Jensen T.S."/>
            <person name="Nigg E.A."/>
            <person name="Brunak S."/>
            <person name="Mann M."/>
        </authorList>
    </citation>
    <scope>ACETYLATION [LARGE SCALE ANALYSIS] AT MET-1 AND SER-2</scope>
    <scope>PHOSPHORYLATION [LARGE SCALE ANALYSIS] AT SER-2 AND SER-9</scope>
    <scope>CLEAVAGE OF INITIATOR METHIONINE [LARGE SCALE ANALYSIS]</scope>
    <scope>IDENTIFICATION BY MASS SPECTROMETRY [LARGE SCALE ANALYSIS]</scope>
    <source>
        <tissue>Cervix carcinoma</tissue>
    </source>
</reference>
<reference key="18">
    <citation type="journal article" date="2011" name="BMC Syst. Biol.">
        <title>Initial characterization of the human central proteome.</title>
        <authorList>
            <person name="Burkard T.R."/>
            <person name="Planyavsky M."/>
            <person name="Kaupe I."/>
            <person name="Breitwieser F.P."/>
            <person name="Buerckstuemmer T."/>
            <person name="Bennett K.L."/>
            <person name="Superti-Furga G."/>
            <person name="Colinge J."/>
        </authorList>
    </citation>
    <scope>IDENTIFICATION BY MASS SPECTROMETRY [LARGE SCALE ANALYSIS]</scope>
</reference>
<reference key="19">
    <citation type="journal article" date="2011" name="Sci. Signal.">
        <title>System-wide temporal characterization of the proteome and phosphoproteome of human embryonic stem cell differentiation.</title>
        <authorList>
            <person name="Rigbolt K.T."/>
            <person name="Prokhorova T.A."/>
            <person name="Akimov V."/>
            <person name="Henningsen J."/>
            <person name="Johansen P.T."/>
            <person name="Kratchmarova I."/>
            <person name="Kassem M."/>
            <person name="Mann M."/>
            <person name="Olsen J.V."/>
            <person name="Blagoev B."/>
        </authorList>
    </citation>
    <scope>ACETYLATION [LARGE SCALE ANALYSIS] AT SER-2</scope>
    <scope>PHOSPHORYLATION [LARGE SCALE ANALYSIS] AT SER-2 AND SER-10</scope>
    <scope>CLEAVAGE OF INITIATOR METHIONINE [LARGE SCALE ANALYSIS]</scope>
    <scope>IDENTIFICATION BY MASS SPECTROMETRY [LARGE SCALE ANALYSIS]</scope>
</reference>
<reference key="20">
    <citation type="journal article" date="2012" name="Mol. Cell. Proteomics">
        <title>Comparative large-scale characterisation of plant vs. mammal proteins reveals similar and idiosyncratic N-alpha acetylation features.</title>
        <authorList>
            <person name="Bienvenut W.V."/>
            <person name="Sumpton D."/>
            <person name="Martinez A."/>
            <person name="Lilla S."/>
            <person name="Espagne C."/>
            <person name="Meinnel T."/>
            <person name="Giglione C."/>
        </authorList>
    </citation>
    <scope>ACETYLATION [LARGE SCALE ANALYSIS] AT SER-2</scope>
    <scope>CLEAVAGE OF INITIATOR METHIONINE [LARGE SCALE ANALYSIS]</scope>
    <scope>IDENTIFICATION BY MASS SPECTROMETRY [LARGE SCALE ANALYSIS]</scope>
</reference>
<reference key="21">
    <citation type="journal article" date="2012" name="Proc. Natl. Acad. Sci. U.S.A.">
        <title>N-terminal acetylome analyses and functional insights of the N-terminal acetyltransferase NatB.</title>
        <authorList>
            <person name="Van Damme P."/>
            <person name="Lasa M."/>
            <person name="Polevoda B."/>
            <person name="Gazquez C."/>
            <person name="Elosegui-Artola A."/>
            <person name="Kim D.S."/>
            <person name="De Juan-Pardo E."/>
            <person name="Demeyer K."/>
            <person name="Hole K."/>
            <person name="Larrea E."/>
            <person name="Timmerman E."/>
            <person name="Prieto J."/>
            <person name="Arnesen T."/>
            <person name="Sherman F."/>
            <person name="Gevaert K."/>
            <person name="Aldabe R."/>
        </authorList>
    </citation>
    <scope>ACETYLATION [LARGE SCALE ANALYSIS] AT SER-2</scope>
    <scope>CLEAVAGE OF INITIATOR METHIONINE [LARGE SCALE ANALYSIS]</scope>
    <scope>IDENTIFICATION BY MASS SPECTROMETRY [LARGE SCALE ANALYSIS]</scope>
</reference>
<reference key="22">
    <citation type="journal article" date="2013" name="J. Proteome Res.">
        <title>Toward a comprehensive characterization of a human cancer cell phosphoproteome.</title>
        <authorList>
            <person name="Zhou H."/>
            <person name="Di Palma S."/>
            <person name="Preisinger C."/>
            <person name="Peng M."/>
            <person name="Polat A.N."/>
            <person name="Heck A.J."/>
            <person name="Mohammed S."/>
        </authorList>
    </citation>
    <scope>PHOSPHORYLATION [LARGE SCALE ANALYSIS] AT SER-2 AND SER-10</scope>
    <scope>IDENTIFICATION BY MASS SPECTROMETRY [LARGE SCALE ANALYSIS]</scope>
    <source>
        <tissue>Cervix carcinoma</tissue>
        <tissue>Erythroleukemia</tissue>
    </source>
</reference>
<reference key="23">
    <citation type="journal article" date="2014" name="J. Proteomics">
        <title>An enzyme assisted RP-RPLC approach for in-depth analysis of human liver phosphoproteome.</title>
        <authorList>
            <person name="Bian Y."/>
            <person name="Song C."/>
            <person name="Cheng K."/>
            <person name="Dong M."/>
            <person name="Wang F."/>
            <person name="Huang J."/>
            <person name="Sun D."/>
            <person name="Wang L."/>
            <person name="Ye M."/>
            <person name="Zou H."/>
        </authorList>
    </citation>
    <scope>IDENTIFICATION BY MASS SPECTROMETRY [LARGE SCALE ANALYSIS]</scope>
    <source>
        <tissue>Liver</tissue>
    </source>
</reference>
<reference key="24">
    <citation type="journal article" date="2017" name="Nat. Struct. Mol. Biol.">
        <title>Site-specific mapping of the human SUMO proteome reveals co-modification with phosphorylation.</title>
        <authorList>
            <person name="Hendriks I.A."/>
            <person name="Lyon D."/>
            <person name="Young C."/>
            <person name="Jensen L.J."/>
            <person name="Vertegaal A.C."/>
            <person name="Nielsen M.L."/>
        </authorList>
    </citation>
    <scope>SUMOYLATION [LARGE SCALE ANALYSIS] AT LYS-103</scope>
    <scope>IDENTIFICATION BY MASS SPECTROMETRY [LARGE SCALE ANALYSIS]</scope>
</reference>
<reference key="25">
    <citation type="journal article" date="2011" name="Biochem. Biophys. Res. Commun.">
        <title>NMR structure of human thymosin alpha-1.</title>
        <authorList>
            <person name="Elizondo-Riojas M.A."/>
            <person name="Chamow S.M."/>
            <person name="Tuthill C.W."/>
            <person name="Gorenstein D.G."/>
            <person name="Volk D.E."/>
        </authorList>
    </citation>
    <scope>STRUCTURE BY NMR OF 2-29</scope>
    <scope>ACETYLATION AT SER-2</scope>
</reference>